<evidence type="ECO:0000250" key="1"/>
<evidence type="ECO:0000255" key="2">
    <source>
        <dbReference type="PROSITE-ProRule" id="PRU00711"/>
    </source>
</evidence>
<protein>
    <recommendedName>
        <fullName>Chlorate reductase subunit beta</fullName>
    </recommendedName>
    <alternativeName>
        <fullName>Chlorate reductase iron-sulfur subunit</fullName>
    </alternativeName>
</protein>
<name>CLRB_IDEDE</name>
<dbReference type="EMBL" id="AJ566363">
    <property type="protein sequence ID" value="CAD97448.1"/>
    <property type="molecule type" value="Genomic_DNA"/>
</dbReference>
<dbReference type="RefSeq" id="WP_013516314.1">
    <property type="nucleotide sequence ID" value="NZ_VZPB01000026.1"/>
</dbReference>
<dbReference type="SMR" id="P60069"/>
<dbReference type="TCDB" id="5.A.3.8.2">
    <property type="family name" value="the prokaryotic molybdopterin-containing oxidoreductase (pmo) family"/>
</dbReference>
<dbReference type="BioCyc" id="MetaCyc:MONOMER-15698"/>
<dbReference type="BRENDA" id="1.97.1.1">
    <property type="organism ID" value="2756"/>
</dbReference>
<dbReference type="GO" id="GO:0016020">
    <property type="term" value="C:membrane"/>
    <property type="evidence" value="ECO:0007669"/>
    <property type="project" value="TreeGrafter"/>
</dbReference>
<dbReference type="GO" id="GO:0042597">
    <property type="term" value="C:periplasmic space"/>
    <property type="evidence" value="ECO:0007669"/>
    <property type="project" value="UniProtKB-SubCell"/>
</dbReference>
<dbReference type="GO" id="GO:0051538">
    <property type="term" value="F:3 iron, 4 sulfur cluster binding"/>
    <property type="evidence" value="ECO:0007669"/>
    <property type="project" value="UniProtKB-KW"/>
</dbReference>
<dbReference type="GO" id="GO:0051539">
    <property type="term" value="F:4 iron, 4 sulfur cluster binding"/>
    <property type="evidence" value="ECO:0007669"/>
    <property type="project" value="UniProtKB-KW"/>
</dbReference>
<dbReference type="GO" id="GO:0009055">
    <property type="term" value="F:electron transfer activity"/>
    <property type="evidence" value="ECO:0007669"/>
    <property type="project" value="TreeGrafter"/>
</dbReference>
<dbReference type="GO" id="GO:0046872">
    <property type="term" value="F:metal ion binding"/>
    <property type="evidence" value="ECO:0007669"/>
    <property type="project" value="UniProtKB-KW"/>
</dbReference>
<dbReference type="GO" id="GO:0009061">
    <property type="term" value="P:anaerobic respiration"/>
    <property type="evidence" value="ECO:0007669"/>
    <property type="project" value="InterPro"/>
</dbReference>
<dbReference type="CDD" id="cd10555">
    <property type="entry name" value="EBDH_beta"/>
    <property type="match status" value="1"/>
</dbReference>
<dbReference type="Gene3D" id="3.30.70.20">
    <property type="match status" value="4"/>
</dbReference>
<dbReference type="InterPro" id="IPR017896">
    <property type="entry name" value="4Fe4S_Fe-S-bd"/>
</dbReference>
<dbReference type="InterPro" id="IPR017839">
    <property type="entry name" value="DMSO_Rdtase_II_Fe-S_su"/>
</dbReference>
<dbReference type="NCBIfam" id="TIGR03478">
    <property type="entry name" value="DMSO_red_II_bet"/>
    <property type="match status" value="1"/>
</dbReference>
<dbReference type="PANTHER" id="PTHR43518">
    <property type="entry name" value="NITRATE REDUCTASE BETA SUBUNIT"/>
    <property type="match status" value="1"/>
</dbReference>
<dbReference type="PANTHER" id="PTHR43518:SF1">
    <property type="entry name" value="RESPIRATORY NITRATE REDUCTASE 1 BETA CHAIN"/>
    <property type="match status" value="1"/>
</dbReference>
<dbReference type="Pfam" id="PF13247">
    <property type="entry name" value="Fer4_11"/>
    <property type="match status" value="1"/>
</dbReference>
<dbReference type="SUPFAM" id="SSF54862">
    <property type="entry name" value="4Fe-4S ferredoxins"/>
    <property type="match status" value="1"/>
</dbReference>
<dbReference type="PROSITE" id="PS51379">
    <property type="entry name" value="4FE4S_FER_2"/>
    <property type="match status" value="3"/>
</dbReference>
<comment type="function">
    <text evidence="1">Electron transfer subunit of the terminal reductase during anaerobic growth on chlorate.</text>
</comment>
<comment type="cofactor">
    <cofactor evidence="1">
        <name>[3Fe-4S] cluster</name>
        <dbReference type="ChEBI" id="CHEBI:21137"/>
    </cofactor>
    <text evidence="1">Binds 1 [3Fe-4S] cluster.</text>
</comment>
<comment type="cofactor">
    <cofactor evidence="1">
        <name>[4Fe-4S] cluster</name>
        <dbReference type="ChEBI" id="CHEBI:49883"/>
    </cofactor>
    <text evidence="1">Binds 3 [4Fe-4S] clusters.</text>
</comment>
<comment type="subunit">
    <text>Heterotrimer of alpha, beta and gamma subunits.</text>
</comment>
<comment type="subcellular location">
    <subcellularLocation>
        <location>Periplasm</location>
    </subcellularLocation>
    <text>Probably translocated together with ClrA, which possesses a Tat-type signal.</text>
</comment>
<comment type="biotechnology">
    <text>Has potential use in bioremediation of waste sites contaminated with chlorate, such as pulp and paper industry wastewater.</text>
</comment>
<reference key="1">
    <citation type="journal article" date="2003" name="Appl. Environ. Microbiol.">
        <title>A gene cluster for chlorate metabolism in Ideonella dechloratans.</title>
        <authorList>
            <person name="Danielsson Thorell H."/>
            <person name="Stenklo K."/>
            <person name="Karlsson J."/>
            <person name="Nilsson T."/>
        </authorList>
    </citation>
    <scope>NUCLEOTIDE SEQUENCE [GENOMIC DNA]</scope>
    <scope>CHARACTERIZATION</scope>
</reference>
<gene>
    <name type="primary">clrB</name>
</gene>
<organism>
    <name type="scientific">Ideonella dechloratans</name>
    <dbReference type="NCBI Taxonomy" id="36863"/>
    <lineage>
        <taxon>Bacteria</taxon>
        <taxon>Pseudomonadati</taxon>
        <taxon>Pseudomonadota</taxon>
        <taxon>Betaproteobacteria</taxon>
        <taxon>Burkholderiales</taxon>
        <taxon>Sphaerotilaceae</taxon>
        <taxon>Ideonella</taxon>
    </lineage>
</organism>
<keyword id="KW-0003">3Fe-4S</keyword>
<keyword id="KW-0004">4Fe-4S</keyword>
<keyword id="KW-0249">Electron transport</keyword>
<keyword id="KW-0408">Iron</keyword>
<keyword id="KW-0411">Iron-sulfur</keyword>
<keyword id="KW-0479">Metal-binding</keyword>
<keyword id="KW-0574">Periplasm</keyword>
<keyword id="KW-0677">Repeat</keyword>
<keyword id="KW-0813">Transport</keyword>
<feature type="chain" id="PRO_0000159291" description="Chlorate reductase subunit beta">
    <location>
        <begin position="1"/>
        <end position="328"/>
    </location>
</feature>
<feature type="domain" description="4Fe-4S ferredoxin-type 1" evidence="2">
    <location>
        <begin position="6"/>
        <end position="35"/>
    </location>
</feature>
<feature type="domain" description="4Fe-4S ferredoxin-type 2" evidence="2">
    <location>
        <begin position="125"/>
        <end position="156"/>
    </location>
</feature>
<feature type="domain" description="4Fe-4S ferredoxin-type 3" evidence="2">
    <location>
        <begin position="158"/>
        <end position="187"/>
    </location>
</feature>
<feature type="binding site" evidence="1">
    <location>
        <position position="15"/>
    </location>
    <ligand>
        <name>[4Fe-4S] cluster</name>
        <dbReference type="ChEBI" id="CHEBI:49883"/>
        <label>1</label>
    </ligand>
</feature>
<feature type="binding site" evidence="1">
    <location>
        <position position="18"/>
    </location>
    <ligand>
        <name>[4Fe-4S] cluster</name>
        <dbReference type="ChEBI" id="CHEBI:49883"/>
        <label>1</label>
    </ligand>
</feature>
<feature type="binding site" evidence="1">
    <location>
        <position position="21"/>
    </location>
    <ligand>
        <name>[4Fe-4S] cluster</name>
        <dbReference type="ChEBI" id="CHEBI:49883"/>
        <label>1</label>
    </ligand>
</feature>
<feature type="binding site" evidence="1">
    <location>
        <position position="25"/>
    </location>
    <ligand>
        <name>[4Fe-4S] cluster</name>
        <dbReference type="ChEBI" id="CHEBI:49883"/>
        <label>2</label>
    </ligand>
</feature>
<feature type="binding site" evidence="1">
    <location>
        <position position="134"/>
    </location>
    <ligand>
        <name>[4Fe-4S] cluster</name>
        <dbReference type="ChEBI" id="CHEBI:49883"/>
        <label>3</label>
    </ligand>
</feature>
<feature type="binding site" evidence="1">
    <location>
        <position position="137"/>
    </location>
    <ligand>
        <name>[4Fe-4S] cluster</name>
        <dbReference type="ChEBI" id="CHEBI:49883"/>
        <label>3</label>
    </ligand>
</feature>
<feature type="binding site" evidence="1">
    <location>
        <position position="142"/>
    </location>
    <ligand>
        <name>[4Fe-4S] cluster</name>
        <dbReference type="ChEBI" id="CHEBI:49883"/>
        <label>3</label>
    </ligand>
</feature>
<feature type="binding site" evidence="1">
    <location>
        <position position="146"/>
    </location>
    <ligand>
        <name>[3Fe-4S] cluster</name>
        <dbReference type="ChEBI" id="CHEBI:21137"/>
    </ligand>
</feature>
<feature type="binding site" evidence="1">
    <location>
        <position position="167"/>
    </location>
    <ligand>
        <name>[3Fe-4S] cluster</name>
        <dbReference type="ChEBI" id="CHEBI:21137"/>
    </ligand>
</feature>
<feature type="binding site" evidence="1">
    <location>
        <position position="173"/>
    </location>
    <ligand>
        <name>[3Fe-4S] cluster</name>
        <dbReference type="ChEBI" id="CHEBI:21137"/>
    </ligand>
</feature>
<feature type="binding site" evidence="1">
    <location>
        <position position="177"/>
    </location>
    <ligand>
        <name>[4Fe-4S] cluster</name>
        <dbReference type="ChEBI" id="CHEBI:49883"/>
        <label>3</label>
    </ligand>
</feature>
<feature type="binding site" evidence="1">
    <location>
        <position position="194"/>
    </location>
    <ligand>
        <name>[4Fe-4S] cluster</name>
        <dbReference type="ChEBI" id="CHEBI:49883"/>
        <label>2</label>
    </ligand>
</feature>
<feature type="binding site" evidence="1">
    <location>
        <position position="197"/>
    </location>
    <ligand>
        <name>[4Fe-4S] cluster</name>
        <dbReference type="ChEBI" id="CHEBI:49883"/>
        <label>2</label>
    </ligand>
</feature>
<feature type="binding site" evidence="1">
    <location>
        <position position="209"/>
    </location>
    <ligand>
        <name>[4Fe-4S] cluster</name>
        <dbReference type="ChEBI" id="CHEBI:49883"/>
        <label>2</label>
    </ligand>
</feature>
<feature type="binding site" evidence="1">
    <location>
        <position position="213"/>
    </location>
    <ligand>
        <name>[4Fe-4S] cluster</name>
        <dbReference type="ChEBI" id="CHEBI:49883"/>
        <label>1</label>
    </ligand>
</feature>
<sequence length="328" mass="37002">MSQRQVAYVFDLNKCIGCHTCTMACKQLWTNRDGREYMYWNNVETRPGKGYPKNWEGKGGGFDQEGKLKTNGIIPIMADYGGRIGDFNLNEVLLEGKADQVVPHEKATWGPNWDEDEGKGEFPNNHSFYLPRICNHCSNPACLAACPTKAIYKRPEDGIVVVDQTRCRGYRYCVKACPYGKMYFNLQKGKSEKCIGCYPRVEKGEAPACVKQCSGRIRFWGYRDDKNGPIYKLVEQWKVALPLHAEYGTEPNVFYVPPMNTTPPPFEEDGRLGDKPRIPIEDLEALFGPGVKQALATLGGEMAKRRKAQASELTDILIGFTNKDRYGV</sequence>
<proteinExistence type="evidence at protein level"/>
<accession>P60069</accession>